<comment type="function">
    <text evidence="1">Catalyzes the synthesis of the hydroxymethylpyrimidine phosphate (HMP-P) moiety of thiamine from aminoimidazole ribotide (AIR) in a radical S-adenosyl-L-methionine (SAM)-dependent reaction.</text>
</comment>
<comment type="catalytic activity">
    <reaction evidence="1">
        <text>5-amino-1-(5-phospho-beta-D-ribosyl)imidazole + S-adenosyl-L-methionine = 4-amino-2-methyl-5-(phosphooxymethyl)pyrimidine + CO + 5'-deoxyadenosine + formate + L-methionine + 3 H(+)</text>
        <dbReference type="Rhea" id="RHEA:24840"/>
        <dbReference type="ChEBI" id="CHEBI:15378"/>
        <dbReference type="ChEBI" id="CHEBI:15740"/>
        <dbReference type="ChEBI" id="CHEBI:17245"/>
        <dbReference type="ChEBI" id="CHEBI:17319"/>
        <dbReference type="ChEBI" id="CHEBI:57844"/>
        <dbReference type="ChEBI" id="CHEBI:58354"/>
        <dbReference type="ChEBI" id="CHEBI:59789"/>
        <dbReference type="ChEBI" id="CHEBI:137981"/>
        <dbReference type="EC" id="4.1.99.17"/>
    </reaction>
</comment>
<comment type="cofactor">
    <cofactor evidence="1">
        <name>[4Fe-4S] cluster</name>
        <dbReference type="ChEBI" id="CHEBI:49883"/>
    </cofactor>
    <text evidence="1">Binds 1 [4Fe-4S] cluster per subunit. The cluster is coordinated with 3 cysteines and an exchangeable S-adenosyl-L-methionine.</text>
</comment>
<comment type="pathway">
    <text evidence="1">Cofactor biosynthesis; thiamine diphosphate biosynthesis.</text>
</comment>
<comment type="subunit">
    <text evidence="1">Homodimer.</text>
</comment>
<comment type="similarity">
    <text evidence="1">Belongs to the ThiC family.</text>
</comment>
<dbReference type="EC" id="4.1.99.17" evidence="1"/>
<dbReference type="EMBL" id="CP000352">
    <property type="protein sequence ID" value="ABF07048.1"/>
    <property type="molecule type" value="Genomic_DNA"/>
</dbReference>
<dbReference type="SMR" id="Q1LS28"/>
<dbReference type="STRING" id="266264.Rmet_0162"/>
<dbReference type="KEGG" id="rme:Rmet_0162"/>
<dbReference type="eggNOG" id="COG0422">
    <property type="taxonomic scope" value="Bacteria"/>
</dbReference>
<dbReference type="HOGENOM" id="CLU_013181_2_1_4"/>
<dbReference type="UniPathway" id="UPA00060"/>
<dbReference type="Proteomes" id="UP000002429">
    <property type="component" value="Chromosome"/>
</dbReference>
<dbReference type="GO" id="GO:0005829">
    <property type="term" value="C:cytosol"/>
    <property type="evidence" value="ECO:0007669"/>
    <property type="project" value="TreeGrafter"/>
</dbReference>
<dbReference type="GO" id="GO:0051539">
    <property type="term" value="F:4 iron, 4 sulfur cluster binding"/>
    <property type="evidence" value="ECO:0007669"/>
    <property type="project" value="UniProtKB-KW"/>
</dbReference>
<dbReference type="GO" id="GO:0016830">
    <property type="term" value="F:carbon-carbon lyase activity"/>
    <property type="evidence" value="ECO:0007669"/>
    <property type="project" value="InterPro"/>
</dbReference>
<dbReference type="GO" id="GO:0008270">
    <property type="term" value="F:zinc ion binding"/>
    <property type="evidence" value="ECO:0007669"/>
    <property type="project" value="UniProtKB-UniRule"/>
</dbReference>
<dbReference type="GO" id="GO:0009228">
    <property type="term" value="P:thiamine biosynthetic process"/>
    <property type="evidence" value="ECO:0007669"/>
    <property type="project" value="UniProtKB-KW"/>
</dbReference>
<dbReference type="GO" id="GO:0009229">
    <property type="term" value="P:thiamine diphosphate biosynthetic process"/>
    <property type="evidence" value="ECO:0007669"/>
    <property type="project" value="UniProtKB-UniRule"/>
</dbReference>
<dbReference type="FunFam" id="3.20.20.540:FF:000001">
    <property type="entry name" value="Phosphomethylpyrimidine synthase"/>
    <property type="match status" value="1"/>
</dbReference>
<dbReference type="Gene3D" id="6.10.250.620">
    <property type="match status" value="1"/>
</dbReference>
<dbReference type="Gene3D" id="3.20.20.540">
    <property type="entry name" value="Radical SAM ThiC family, central domain"/>
    <property type="match status" value="1"/>
</dbReference>
<dbReference type="HAMAP" id="MF_00089">
    <property type="entry name" value="ThiC"/>
    <property type="match status" value="1"/>
</dbReference>
<dbReference type="InterPro" id="IPR037509">
    <property type="entry name" value="ThiC"/>
</dbReference>
<dbReference type="InterPro" id="IPR025747">
    <property type="entry name" value="ThiC-associated_dom"/>
</dbReference>
<dbReference type="InterPro" id="IPR038521">
    <property type="entry name" value="ThiC/Bza_core_dom"/>
</dbReference>
<dbReference type="InterPro" id="IPR002817">
    <property type="entry name" value="ThiC/BzaA/B"/>
</dbReference>
<dbReference type="NCBIfam" id="NF006763">
    <property type="entry name" value="PRK09284.1"/>
    <property type="match status" value="1"/>
</dbReference>
<dbReference type="NCBIfam" id="NF009895">
    <property type="entry name" value="PRK13352.1"/>
    <property type="match status" value="1"/>
</dbReference>
<dbReference type="NCBIfam" id="TIGR00190">
    <property type="entry name" value="thiC"/>
    <property type="match status" value="1"/>
</dbReference>
<dbReference type="PANTHER" id="PTHR30557:SF1">
    <property type="entry name" value="PHOSPHOMETHYLPYRIMIDINE SYNTHASE, CHLOROPLASTIC"/>
    <property type="match status" value="1"/>
</dbReference>
<dbReference type="PANTHER" id="PTHR30557">
    <property type="entry name" value="THIAMINE BIOSYNTHESIS PROTEIN THIC"/>
    <property type="match status" value="1"/>
</dbReference>
<dbReference type="Pfam" id="PF13667">
    <property type="entry name" value="ThiC-associated"/>
    <property type="match status" value="1"/>
</dbReference>
<dbReference type="Pfam" id="PF01964">
    <property type="entry name" value="ThiC_Rad_SAM"/>
    <property type="match status" value="1"/>
</dbReference>
<dbReference type="SFLD" id="SFLDF00407">
    <property type="entry name" value="phosphomethylpyrimidine_syntha"/>
    <property type="match status" value="1"/>
</dbReference>
<dbReference type="SFLD" id="SFLDG01114">
    <property type="entry name" value="phosphomethylpyrimidine_syntha"/>
    <property type="match status" value="1"/>
</dbReference>
<dbReference type="SFLD" id="SFLDS00113">
    <property type="entry name" value="Radical_SAM_Phosphomethylpyrim"/>
    <property type="match status" value="1"/>
</dbReference>
<proteinExistence type="inferred from homology"/>
<name>THIC_CUPMC</name>
<reference key="1">
    <citation type="journal article" date="2010" name="PLoS ONE">
        <title>The complete genome sequence of Cupriavidus metallidurans strain CH34, a master survivalist in harsh and anthropogenic environments.</title>
        <authorList>
            <person name="Janssen P.J."/>
            <person name="Van Houdt R."/>
            <person name="Moors H."/>
            <person name="Monsieurs P."/>
            <person name="Morin N."/>
            <person name="Michaux A."/>
            <person name="Benotmane M.A."/>
            <person name="Leys N."/>
            <person name="Vallaeys T."/>
            <person name="Lapidus A."/>
            <person name="Monchy S."/>
            <person name="Medigue C."/>
            <person name="Taghavi S."/>
            <person name="McCorkle S."/>
            <person name="Dunn J."/>
            <person name="van der Lelie D."/>
            <person name="Mergeay M."/>
        </authorList>
    </citation>
    <scope>NUCLEOTIDE SEQUENCE [LARGE SCALE GENOMIC DNA]</scope>
    <source>
        <strain>ATCC 43123 / DSM 2839 / NBRC 102507 / CH34</strain>
    </source>
</reference>
<keyword id="KW-0004">4Fe-4S</keyword>
<keyword id="KW-0408">Iron</keyword>
<keyword id="KW-0411">Iron-sulfur</keyword>
<keyword id="KW-0456">Lyase</keyword>
<keyword id="KW-0479">Metal-binding</keyword>
<keyword id="KW-1185">Reference proteome</keyword>
<keyword id="KW-0949">S-adenosyl-L-methionine</keyword>
<keyword id="KW-0784">Thiamine biosynthesis</keyword>
<keyword id="KW-0862">Zinc</keyword>
<feature type="chain" id="PRO_1000004797" description="Phosphomethylpyrimidine synthase">
    <location>
        <begin position="1"/>
        <end position="625"/>
    </location>
</feature>
<feature type="binding site" evidence="1">
    <location>
        <position position="237"/>
    </location>
    <ligand>
        <name>substrate</name>
    </ligand>
</feature>
<feature type="binding site" evidence="1">
    <location>
        <position position="266"/>
    </location>
    <ligand>
        <name>substrate</name>
    </ligand>
</feature>
<feature type="binding site" evidence="1">
    <location>
        <position position="295"/>
    </location>
    <ligand>
        <name>substrate</name>
    </ligand>
</feature>
<feature type="binding site" evidence="1">
    <location>
        <position position="331"/>
    </location>
    <ligand>
        <name>substrate</name>
    </ligand>
</feature>
<feature type="binding site" evidence="1">
    <location>
        <begin position="351"/>
        <end position="353"/>
    </location>
    <ligand>
        <name>substrate</name>
    </ligand>
</feature>
<feature type="binding site" evidence="1">
    <location>
        <begin position="392"/>
        <end position="395"/>
    </location>
    <ligand>
        <name>substrate</name>
    </ligand>
</feature>
<feature type="binding site" evidence="1">
    <location>
        <position position="431"/>
    </location>
    <ligand>
        <name>substrate</name>
    </ligand>
</feature>
<feature type="binding site" evidence="1">
    <location>
        <position position="435"/>
    </location>
    <ligand>
        <name>Zn(2+)</name>
        <dbReference type="ChEBI" id="CHEBI:29105"/>
    </ligand>
</feature>
<feature type="binding site" evidence="1">
    <location>
        <position position="458"/>
    </location>
    <ligand>
        <name>substrate</name>
    </ligand>
</feature>
<feature type="binding site" evidence="1">
    <location>
        <position position="499"/>
    </location>
    <ligand>
        <name>Zn(2+)</name>
        <dbReference type="ChEBI" id="CHEBI:29105"/>
    </ligand>
</feature>
<feature type="binding site" evidence="1">
    <location>
        <position position="579"/>
    </location>
    <ligand>
        <name>[4Fe-4S] cluster</name>
        <dbReference type="ChEBI" id="CHEBI:49883"/>
        <note>4Fe-4S-S-AdoMet</note>
    </ligand>
</feature>
<feature type="binding site" evidence="1">
    <location>
        <position position="582"/>
    </location>
    <ligand>
        <name>[4Fe-4S] cluster</name>
        <dbReference type="ChEBI" id="CHEBI:49883"/>
        <note>4Fe-4S-S-AdoMet</note>
    </ligand>
</feature>
<feature type="binding site" evidence="1">
    <location>
        <position position="587"/>
    </location>
    <ligand>
        <name>[4Fe-4S] cluster</name>
        <dbReference type="ChEBI" id="CHEBI:49883"/>
        <note>4Fe-4S-S-AdoMet</note>
    </ligand>
</feature>
<gene>
    <name evidence="1" type="primary">thiC</name>
    <name type="ordered locus">Rmet_0162</name>
</gene>
<accession>Q1LS28</accession>
<sequence length="625" mass="69358">MARTAPAASFESLESDLDQKFAYPASSKTYITGSRPDIRVPLRTILQTATRTEKGEMANPPIPVYDTSGPYSDPDVHIDLKAGLPPVRAKWIEERNDTEVLTGLSSEYGLARANDPATAHLRFAQLTNPRRAKAGANVSQMHYARKGIITPEMEYVALRESLNLQALYDKPEYKALLRQHPGNALGAALPLRPEDMTPEFVRREVAAGRAIIPANINHTELEPMAIGRNFRVKINGNLGNSAVTSSLAEEVEKMVWSIRWGADTIMDLSTGKHIHETREWILRNSPVPIGTVPIYQALDKTGGIAEDLTWEMFRDTLIEQAEQGVDYFTIHAGVLLRYVPMTADRVTGIVSRGGSIMAKWCLAHHKENFLYTHFDEICEIMKAYDVSFSLGDGLRPGCIADSNDDAQFGELRTLGELTAKAWEHDVQVMIEGPGHVPLQRIQANMDEELKHCYEAPFYTLGPLVTDIAPGYDHITSGIGAANIGWMGTAMLCYVTPKEHLGLPDKEDVREGIITYKIAAHAADLAKGWPGAQLRDNALSKARFEFRWEDQFNLGLDPERARSFHDATLPAEGAKIAHFCSMCGPKFCSMKITQEVRDYAASLPEAERGMQEKSIEFVKTGSKIYS</sequence>
<organism>
    <name type="scientific">Cupriavidus metallidurans (strain ATCC 43123 / DSM 2839 / NBRC 102507 / CH34)</name>
    <name type="common">Ralstonia metallidurans</name>
    <dbReference type="NCBI Taxonomy" id="266264"/>
    <lineage>
        <taxon>Bacteria</taxon>
        <taxon>Pseudomonadati</taxon>
        <taxon>Pseudomonadota</taxon>
        <taxon>Betaproteobacteria</taxon>
        <taxon>Burkholderiales</taxon>
        <taxon>Burkholderiaceae</taxon>
        <taxon>Cupriavidus</taxon>
    </lineage>
</organism>
<protein>
    <recommendedName>
        <fullName evidence="1">Phosphomethylpyrimidine synthase</fullName>
        <ecNumber evidence="1">4.1.99.17</ecNumber>
    </recommendedName>
    <alternativeName>
        <fullName evidence="1">Hydroxymethylpyrimidine phosphate synthase</fullName>
        <shortName evidence="1">HMP-P synthase</shortName>
        <shortName evidence="1">HMP-phosphate synthase</shortName>
        <shortName evidence="1">HMPP synthase</shortName>
    </alternativeName>
    <alternativeName>
        <fullName evidence="1">Thiamine biosynthesis protein ThiC</fullName>
    </alternativeName>
</protein>
<evidence type="ECO:0000255" key="1">
    <source>
        <dbReference type="HAMAP-Rule" id="MF_00089"/>
    </source>
</evidence>